<proteinExistence type="inferred from homology"/>
<feature type="chain" id="PRO_0000163472" description="Large ribosomal subunit protein bL19">
    <location>
        <begin position="1"/>
        <end position="121"/>
    </location>
</feature>
<gene>
    <name evidence="1" type="primary">rplS</name>
    <name type="ordered locus">lpg0395</name>
</gene>
<reference key="1">
    <citation type="journal article" date="2004" name="Science">
        <title>The genomic sequence of the accidental pathogen Legionella pneumophila.</title>
        <authorList>
            <person name="Chien M."/>
            <person name="Morozova I."/>
            <person name="Shi S."/>
            <person name="Sheng H."/>
            <person name="Chen J."/>
            <person name="Gomez S.M."/>
            <person name="Asamani G."/>
            <person name="Hill K."/>
            <person name="Nuara J."/>
            <person name="Feder M."/>
            <person name="Rineer J."/>
            <person name="Greenberg J.J."/>
            <person name="Steshenko V."/>
            <person name="Park S.H."/>
            <person name="Zhao B."/>
            <person name="Teplitskaya E."/>
            <person name="Edwards J.R."/>
            <person name="Pampou S."/>
            <person name="Georghiou A."/>
            <person name="Chou I.-C."/>
            <person name="Iannuccilli W."/>
            <person name="Ulz M.E."/>
            <person name="Kim D.H."/>
            <person name="Geringer-Sameth A."/>
            <person name="Goldsberry C."/>
            <person name="Morozov P."/>
            <person name="Fischer S.G."/>
            <person name="Segal G."/>
            <person name="Qu X."/>
            <person name="Rzhetsky A."/>
            <person name="Zhang P."/>
            <person name="Cayanis E."/>
            <person name="De Jong P.J."/>
            <person name="Ju J."/>
            <person name="Kalachikov S."/>
            <person name="Shuman H.A."/>
            <person name="Russo J.J."/>
        </authorList>
    </citation>
    <scope>NUCLEOTIDE SEQUENCE [LARGE SCALE GENOMIC DNA]</scope>
    <source>
        <strain>Philadelphia 1 / ATCC 33152 / DSM 7513</strain>
    </source>
</reference>
<comment type="function">
    <text evidence="1">This protein is located at the 30S-50S ribosomal subunit interface and may play a role in the structure and function of the aminoacyl-tRNA binding site.</text>
</comment>
<comment type="similarity">
    <text evidence="1">Belongs to the bacterial ribosomal protein bL19 family.</text>
</comment>
<protein>
    <recommendedName>
        <fullName evidence="1">Large ribosomal subunit protein bL19</fullName>
    </recommendedName>
    <alternativeName>
        <fullName evidence="2">50S ribosomal protein L19</fullName>
    </alternativeName>
</protein>
<name>RL19_LEGPH</name>
<dbReference type="EMBL" id="AE017354">
    <property type="protein sequence ID" value="AAU26492.1"/>
    <property type="molecule type" value="Genomic_DNA"/>
</dbReference>
<dbReference type="RefSeq" id="WP_010946144.1">
    <property type="nucleotide sequence ID" value="NC_002942.5"/>
</dbReference>
<dbReference type="RefSeq" id="YP_094439.1">
    <property type="nucleotide sequence ID" value="NC_002942.5"/>
</dbReference>
<dbReference type="SMR" id="Q5ZYH7"/>
<dbReference type="STRING" id="272624.lpg0395"/>
<dbReference type="PaxDb" id="272624-lpg0395"/>
<dbReference type="GeneID" id="57034399"/>
<dbReference type="KEGG" id="lpn:lpg0395"/>
<dbReference type="PATRIC" id="fig|272624.6.peg.409"/>
<dbReference type="eggNOG" id="COG0335">
    <property type="taxonomic scope" value="Bacteria"/>
</dbReference>
<dbReference type="HOGENOM" id="CLU_103507_1_0_6"/>
<dbReference type="OrthoDB" id="9803541at2"/>
<dbReference type="Proteomes" id="UP000000609">
    <property type="component" value="Chromosome"/>
</dbReference>
<dbReference type="GO" id="GO:0022625">
    <property type="term" value="C:cytosolic large ribosomal subunit"/>
    <property type="evidence" value="ECO:0007669"/>
    <property type="project" value="TreeGrafter"/>
</dbReference>
<dbReference type="GO" id="GO:0003735">
    <property type="term" value="F:structural constituent of ribosome"/>
    <property type="evidence" value="ECO:0007669"/>
    <property type="project" value="InterPro"/>
</dbReference>
<dbReference type="GO" id="GO:0006412">
    <property type="term" value="P:translation"/>
    <property type="evidence" value="ECO:0007669"/>
    <property type="project" value="UniProtKB-UniRule"/>
</dbReference>
<dbReference type="FunFam" id="2.30.30.790:FF:000001">
    <property type="entry name" value="50S ribosomal protein L19"/>
    <property type="match status" value="1"/>
</dbReference>
<dbReference type="Gene3D" id="2.30.30.790">
    <property type="match status" value="1"/>
</dbReference>
<dbReference type="HAMAP" id="MF_00402">
    <property type="entry name" value="Ribosomal_bL19"/>
    <property type="match status" value="1"/>
</dbReference>
<dbReference type="InterPro" id="IPR001857">
    <property type="entry name" value="Ribosomal_bL19"/>
</dbReference>
<dbReference type="InterPro" id="IPR018257">
    <property type="entry name" value="Ribosomal_bL19_CS"/>
</dbReference>
<dbReference type="InterPro" id="IPR038657">
    <property type="entry name" value="Ribosomal_bL19_sf"/>
</dbReference>
<dbReference type="InterPro" id="IPR008991">
    <property type="entry name" value="Translation_prot_SH3-like_sf"/>
</dbReference>
<dbReference type="NCBIfam" id="TIGR01024">
    <property type="entry name" value="rplS_bact"/>
    <property type="match status" value="1"/>
</dbReference>
<dbReference type="PANTHER" id="PTHR15680:SF9">
    <property type="entry name" value="LARGE RIBOSOMAL SUBUNIT PROTEIN BL19M"/>
    <property type="match status" value="1"/>
</dbReference>
<dbReference type="PANTHER" id="PTHR15680">
    <property type="entry name" value="RIBOSOMAL PROTEIN L19"/>
    <property type="match status" value="1"/>
</dbReference>
<dbReference type="Pfam" id="PF01245">
    <property type="entry name" value="Ribosomal_L19"/>
    <property type="match status" value="1"/>
</dbReference>
<dbReference type="PIRSF" id="PIRSF002191">
    <property type="entry name" value="Ribosomal_L19"/>
    <property type="match status" value="1"/>
</dbReference>
<dbReference type="PRINTS" id="PR00061">
    <property type="entry name" value="RIBOSOMALL19"/>
</dbReference>
<dbReference type="SUPFAM" id="SSF50104">
    <property type="entry name" value="Translation proteins SH3-like domain"/>
    <property type="match status" value="1"/>
</dbReference>
<dbReference type="PROSITE" id="PS01015">
    <property type="entry name" value="RIBOSOMAL_L19"/>
    <property type="match status" value="1"/>
</dbReference>
<accession>Q5ZYH7</accession>
<evidence type="ECO:0000255" key="1">
    <source>
        <dbReference type="HAMAP-Rule" id="MF_00402"/>
    </source>
</evidence>
<evidence type="ECO:0000305" key="2"/>
<organism>
    <name type="scientific">Legionella pneumophila subsp. pneumophila (strain Philadelphia 1 / ATCC 33152 / DSM 7513)</name>
    <dbReference type="NCBI Taxonomy" id="272624"/>
    <lineage>
        <taxon>Bacteria</taxon>
        <taxon>Pseudomonadati</taxon>
        <taxon>Pseudomonadota</taxon>
        <taxon>Gammaproteobacteria</taxon>
        <taxon>Legionellales</taxon>
        <taxon>Legionellaceae</taxon>
        <taxon>Legionella</taxon>
    </lineage>
</organism>
<sequence length="121" mass="13668">MTNIIDQINAEQMQGKEIPDFNPGDTVLVQVKVIEGNRERLQAFEGVVIAKRNRGLNSAFTVRKISHNVGVERVFQTYSPIVDSITVKRRGDVRRAKLYYLRNLAGRAARIKEKLSGKKGD</sequence>
<keyword id="KW-1185">Reference proteome</keyword>
<keyword id="KW-0687">Ribonucleoprotein</keyword>
<keyword id="KW-0689">Ribosomal protein</keyword>